<feature type="chain" id="PRO_0000024361" description="Myosin light chain kinase, smooth muscle">
    <location>
        <begin position="1"/>
        <end position="1906"/>
    </location>
</feature>
<feature type="chain" id="PRO_0000424867" description="Myosin light chain kinase, smooth muscle, deglutamylated form">
    <location>
        <begin position="1"/>
        <end position="1901"/>
    </location>
</feature>
<feature type="domain" description="Ig-like C2-type 1">
    <location>
        <begin position="28"/>
        <end position="117"/>
    </location>
</feature>
<feature type="domain" description="Ig-like C2-type 2">
    <location>
        <begin position="156"/>
        <end position="244"/>
    </location>
</feature>
<feature type="domain" description="Ig-like C2-type 3">
    <location>
        <begin position="429"/>
        <end position="517"/>
    </location>
</feature>
<feature type="domain" description="Ig-like C2-type 4">
    <location>
        <begin position="521"/>
        <end position="613"/>
    </location>
</feature>
<feature type="domain" description="Ig-like C2-type 5">
    <location>
        <begin position="637"/>
        <end position="725"/>
    </location>
</feature>
<feature type="repeat" description="IIA-1">
    <location>
        <begin position="660"/>
        <end position="676"/>
    </location>
</feature>
<feature type="repeat" description="IIB-1">
    <location>
        <begin position="693"/>
        <end position="708"/>
    </location>
</feature>
<feature type="domain" description="Ig-like C2-type 6">
    <location>
        <begin position="735"/>
        <end position="830"/>
    </location>
</feature>
<feature type="repeat" description="IIA-2">
    <location>
        <begin position="758"/>
        <end position="774"/>
    </location>
</feature>
<feature type="repeat" description="IIB-2">
    <location>
        <begin position="791"/>
        <end position="807"/>
    </location>
</feature>
<feature type="repeat" description="III-1">
    <location>
        <begin position="970"/>
        <end position="987"/>
    </location>
</feature>
<feature type="repeat" description="III-2">
    <location>
        <begin position="999"/>
        <end position="1016"/>
    </location>
</feature>
<feature type="repeat" description="III-3">
    <location>
        <begin position="1061"/>
        <end position="1078"/>
    </location>
</feature>
<feature type="domain" description="Ig-like C2-type 7">
    <location>
        <begin position="1084"/>
        <end position="1172"/>
    </location>
</feature>
<feature type="repeat" description="IIA-3">
    <location>
        <begin position="1107"/>
        <end position="1123"/>
    </location>
</feature>
<feature type="repeat" description="IIB-3">
    <location>
        <begin position="1140"/>
        <end position="1156"/>
    </location>
</feature>
<feature type="repeat" description="III-4">
    <location>
        <begin position="1209"/>
        <end position="1226"/>
    </location>
</feature>
<feature type="domain" description="Ig-like C2-type 8">
    <location>
        <begin position="1225"/>
        <end position="1313"/>
    </location>
</feature>
<feature type="repeat" description="IIB-4">
    <location>
        <begin position="1281"/>
        <end position="1297"/>
    </location>
</feature>
<feature type="domain" description="Fibronectin type-III" evidence="4">
    <location>
        <begin position="1321"/>
        <end position="1414"/>
    </location>
</feature>
<feature type="domain" description="Protein kinase" evidence="3">
    <location>
        <begin position="1453"/>
        <end position="1708"/>
    </location>
</feature>
<feature type="domain" description="Ig-like C2-type 9">
    <location>
        <begin position="1794"/>
        <end position="1885"/>
    </location>
</feature>
<feature type="repeat" description="IIA-4">
    <location>
        <begin position="1817"/>
        <end position="1833"/>
    </location>
</feature>
<feature type="repeat" description="IIB-5">
    <location>
        <begin position="1851"/>
        <end position="1866"/>
    </location>
</feature>
<feature type="region of interest" description="Disordered" evidence="5">
    <location>
        <begin position="127"/>
        <end position="157"/>
    </location>
</feature>
<feature type="region of interest" description="Disordered" evidence="5">
    <location>
        <begin position="309"/>
        <end position="453"/>
    </location>
</feature>
<feature type="region of interest" description="4 X repeats, motif IIA">
    <location>
        <begin position="660"/>
        <end position="1833"/>
    </location>
</feature>
<feature type="region of interest" description="5 X repeats, motif IIB">
    <location>
        <begin position="693"/>
        <end position="1866"/>
    </location>
</feature>
<feature type="region of interest" description="Disordered" evidence="5">
    <location>
        <begin position="831"/>
        <end position="881"/>
    </location>
</feature>
<feature type="region of interest" description="Disordered" evidence="5">
    <location>
        <begin position="947"/>
        <end position="1086"/>
    </location>
</feature>
<feature type="region of interest" description="4 X repeats, motif III">
    <location>
        <begin position="970"/>
        <end position="1226"/>
    </location>
</feature>
<feature type="region of interest" description="Disordered" evidence="5">
    <location>
        <begin position="1180"/>
        <end position="1227"/>
    </location>
</feature>
<feature type="region of interest" description="Motif IA">
    <location>
        <begin position="1317"/>
        <end position="1364"/>
    </location>
</feature>
<feature type="region of interest" description="Motif IB">
    <location>
        <begin position="1385"/>
        <end position="1402"/>
    </location>
</feature>
<feature type="region of interest" description="Disordered" evidence="5">
    <location>
        <begin position="1414"/>
        <end position="1433"/>
    </location>
</feature>
<feature type="region of interest" description="Calmodulin-binding">
    <location>
        <begin position="1700"/>
        <end position="1763"/>
    </location>
</feature>
<feature type="region of interest" description="Calmodulin autoinhibition (AM13) region" evidence="2">
    <location>
        <begin position="1716"/>
        <end position="1728"/>
    </location>
</feature>
<feature type="region of interest" description="Calmodulin recognition (RS20) region" evidence="2">
    <location>
        <begin position="1730"/>
        <end position="1749"/>
    </location>
</feature>
<feature type="region of interest" description="Disordered" evidence="5">
    <location>
        <begin position="1885"/>
        <end position="1906"/>
    </location>
</feature>
<feature type="compositionally biased region" description="Basic and acidic residues" evidence="5">
    <location>
        <begin position="309"/>
        <end position="321"/>
    </location>
</feature>
<feature type="compositionally biased region" description="Polar residues" evidence="5">
    <location>
        <begin position="345"/>
        <end position="354"/>
    </location>
</feature>
<feature type="compositionally biased region" description="Polar residues" evidence="5">
    <location>
        <begin position="384"/>
        <end position="402"/>
    </location>
</feature>
<feature type="compositionally biased region" description="Basic and acidic residues" evidence="5">
    <location>
        <begin position="403"/>
        <end position="424"/>
    </location>
</feature>
<feature type="compositionally biased region" description="Basic and acidic residues" evidence="5">
    <location>
        <begin position="833"/>
        <end position="850"/>
    </location>
</feature>
<feature type="compositionally biased region" description="Basic and acidic residues" evidence="5">
    <location>
        <begin position="867"/>
        <end position="881"/>
    </location>
</feature>
<feature type="compositionally biased region" description="Pro residues" evidence="5">
    <location>
        <begin position="977"/>
        <end position="988"/>
    </location>
</feature>
<feature type="compositionally biased region" description="Basic and acidic residues" evidence="5">
    <location>
        <begin position="1039"/>
        <end position="1051"/>
    </location>
</feature>
<feature type="compositionally biased region" description="Acidic residues" evidence="5">
    <location>
        <begin position="1415"/>
        <end position="1432"/>
    </location>
</feature>
<feature type="compositionally biased region" description="Acidic residues" evidence="5">
    <location>
        <begin position="1893"/>
        <end position="1906"/>
    </location>
</feature>
<feature type="active site" description="Proton acceptor">
    <location>
        <position position="1574"/>
    </location>
</feature>
<feature type="binding site" evidence="3">
    <location>
        <begin position="1459"/>
        <end position="1467"/>
    </location>
    <ligand>
        <name>ATP</name>
        <dbReference type="ChEBI" id="CHEBI:30616"/>
    </ligand>
</feature>
<feature type="binding site" evidence="3">
    <location>
        <position position="1482"/>
    </location>
    <ligand>
        <name>ATP</name>
        <dbReference type="ChEBI" id="CHEBI:30616"/>
    </ligand>
</feature>
<feature type="modified residue" description="Phosphoserine; by PKG" evidence="7">
    <location>
        <position position="1762"/>
    </location>
</feature>
<feature type="modified residue" description="Phosphoserine; by MAPK" evidence="13">
    <location>
        <position position="1768"/>
    </location>
</feature>
<feature type="splice variant" id="VSP_018852" description="In isoform 3." evidence="9 10">
    <location>
        <begin position="1"/>
        <end position="1749"/>
    </location>
</feature>
<feature type="splice variant" id="VSP_018851" description="In isoform 2." evidence="11">
    <location>
        <begin position="1"/>
        <end position="934"/>
    </location>
</feature>
<feature type="mutagenesis site" description="Decreases membrane translocation." evidence="7">
    <original>S</original>
    <variation>A</variation>
    <location>
        <position position="1762"/>
    </location>
</feature>
<feature type="mutagenesis site" description="Decreases membrane translocation." evidence="7">
    <original>S</original>
    <variation>A</variation>
    <location>
        <position position="1768"/>
    </location>
</feature>
<feature type="sequence conflict" description="In Ref. 5; AAA49069/AAA69964." evidence="12" ref="5">
    <original>R</original>
    <variation>Q</variation>
    <location>
        <position position="1439"/>
    </location>
</feature>
<feature type="sequence conflict" description="In Ref. 8; AA sequence." evidence="12" ref="8">
    <original>E</original>
    <variation>D</variation>
    <location>
        <position position="1776"/>
    </location>
</feature>
<feature type="strand" evidence="16">
    <location>
        <begin position="1719"/>
        <end position="1722"/>
    </location>
</feature>
<feature type="helix" evidence="14">
    <location>
        <begin position="1731"/>
        <end position="1747"/>
    </location>
</feature>
<feature type="strand" evidence="15">
    <location>
        <begin position="1753"/>
        <end position="1758"/>
    </location>
</feature>
<feature type="helix" evidence="15">
    <location>
        <begin position="1759"/>
        <end position="1761"/>
    </location>
</feature>
<evidence type="ECO:0000250" key="1"/>
<evidence type="ECO:0000255" key="2"/>
<evidence type="ECO:0000255" key="3">
    <source>
        <dbReference type="PROSITE-ProRule" id="PRU00159"/>
    </source>
</evidence>
<evidence type="ECO:0000255" key="4">
    <source>
        <dbReference type="PROSITE-ProRule" id="PRU00316"/>
    </source>
</evidence>
<evidence type="ECO:0000256" key="5">
    <source>
        <dbReference type="SAM" id="MobiDB-lite"/>
    </source>
</evidence>
<evidence type="ECO:0000269" key="6">
    <source>
    </source>
</evidence>
<evidence type="ECO:0000269" key="7">
    <source>
    </source>
</evidence>
<evidence type="ECO:0000269" key="8">
    <source>
    </source>
</evidence>
<evidence type="ECO:0000303" key="9">
    <source>
    </source>
</evidence>
<evidence type="ECO:0000303" key="10">
    <source>
    </source>
</evidence>
<evidence type="ECO:0000303" key="11">
    <source>
    </source>
</evidence>
<evidence type="ECO:0000305" key="12"/>
<evidence type="ECO:0000305" key="13">
    <source>
    </source>
</evidence>
<evidence type="ECO:0007829" key="14">
    <source>
        <dbReference type="PDB" id="2O5G"/>
    </source>
</evidence>
<evidence type="ECO:0007829" key="15">
    <source>
        <dbReference type="PDB" id="3EVU"/>
    </source>
</evidence>
<evidence type="ECO:0007829" key="16">
    <source>
        <dbReference type="PDB" id="4OY4"/>
    </source>
</evidence>
<reference key="1">
    <citation type="journal article" date="1995" name="FEBS Lett.">
        <title>Multiple gene products are produced from a novel protein kinase transcription region.</title>
        <authorList>
            <person name="Watterson D.M."/>
            <person name="Collinge M."/>
            <person name="Lukas T.J."/>
            <person name="van Eldik L.J."/>
            <person name="Birukov K.G."/>
            <person name="Stepanova O.V."/>
            <person name="Shirinsky V.P."/>
        </authorList>
    </citation>
    <scope>NUCLEOTIDE SEQUENCE [MRNA] (ISOFORM 2)</scope>
</reference>
<reference key="2">
    <citation type="journal article" date="1990" name="Proc. Natl. Acad. Sci. U.S.A.">
        <title>Regulatory and structural motifs of chicken gizzard myosin light chain kinase.</title>
        <authorList>
            <person name="Olson N.J."/>
            <person name="Pearson R.B."/>
            <person name="Needleman D.S."/>
            <person name="Hurwitz M.J."/>
            <person name="Kemp B.E."/>
            <person name="Means A.R."/>
        </authorList>
    </citation>
    <scope>NUCLEOTIDE SEQUENCE [MRNA] (ISOFORM 1)</scope>
</reference>
<reference key="3">
    <citation type="journal article" date="1998" name="J. Cell. Biochem.">
        <title>The organization of the genetic locus for chicken myosin light chain kinase is complex: multiple proteins are encoded and exhibit differential expression and localization.</title>
        <authorList>
            <person name="Birukov K.G."/>
            <person name="Schavocky J.P."/>
            <person name="Shirinsky V.P."/>
            <person name="Van Eldik L.J."/>
            <person name="Watterson D.M."/>
        </authorList>
    </citation>
    <scope>NUCLEOTIDE SEQUENCE [GENOMIC DNA]</scope>
    <source>
        <tissue>Liver</tissue>
    </source>
</reference>
<reference key="4">
    <citation type="journal article" date="1990" name="J. Cell Biol.">
        <title>Use of DNA sequence and mutant analyses and antisense oligodeoxynucleotides to examine the molecular basis of nonmuscle myosin light chain kinase autoinhibition, calmodulin recognition, and activity.</title>
        <authorList>
            <person name="Shoemaker M.O."/>
            <person name="Lau W."/>
            <person name="Shattuck R.L."/>
            <person name="Kwiatkowski A.P."/>
            <person name="Matrisian P.E."/>
            <person name="Guerra-Santos L."/>
            <person name="Wilson E."/>
            <person name="Lukas T.J."/>
            <person name="van Eldik L.J."/>
            <person name="Watterson D.M."/>
        </authorList>
    </citation>
    <scope>NUCLEOTIDE SEQUENCE [MRNA] OF 649-1906</scope>
    <scope>PARTIAL PROTEIN SEQUENCE</scope>
    <source>
        <tissue>Fibroblast</tissue>
    </source>
</reference>
<reference key="5">
    <citation type="journal article" date="1986" name="Biochemistry">
        <title>Domain organization of chicken gizzard myosin light chain kinase deduced from a cloned cDNA.</title>
        <authorList>
            <person name="Guerriero V. Jr."/>
            <person name="Russo M.A."/>
            <person name="Olson N.J."/>
            <person name="Putkey J.A."/>
            <person name="Means A.R."/>
        </authorList>
    </citation>
    <scope>NUCLEOTIDE SEQUENCE [MRNA] OF 1259-1906</scope>
    <source>
        <tissue>Gizzard</tissue>
    </source>
</reference>
<reference key="6">
    <citation type="journal article" date="1992" name="Arch. Biochem. Biophys.">
        <title>Molecular cloning of the chicken gizzard telokin gene and cDNA.</title>
        <authorList>
            <person name="Yoshikai S."/>
            <person name="Ikebe M."/>
        </authorList>
    </citation>
    <scope>NUCLEOTIDE SEQUENCE [MRNA] OF 1750-1906 (ISOFORM 3)</scope>
    <source>
        <tissue>Gizzard</tissue>
    </source>
</reference>
<reference key="7">
    <citation type="journal article" date="1992" name="Mol. Cell. Biol.">
        <title>Structure and expression of a calcium-binding protein gene contained within a calmodulin-regulated protein kinase gene.</title>
        <authorList>
            <person name="Collinge M."/>
            <person name="Matrisian P.E."/>
            <person name="Zimmer W.E."/>
            <person name="Shattuck R.L."/>
            <person name="Lukas T.J."/>
            <person name="van Eldik L.J."/>
            <person name="Watterson D.M."/>
        </authorList>
    </citation>
    <scope>NUCLEOTIDE SEQUENCE [GENOMIC DNA / MRNA] OF 1750-1906 (ISOFORM 3)</scope>
</reference>
<reference key="8">
    <citation type="journal article" date="1997" name="Biochemistry">
        <title>Characterization of the chicken telokin heterogeneity by time-of-flight mass spectrometry.</title>
        <authorList>
            <person name="Rusconi F."/>
            <person name="Potier M.C."/>
            <person name="Le Caer J.P."/>
            <person name="Schmitter J.M."/>
            <person name="Rossier J."/>
        </authorList>
    </citation>
    <scope>PROTEIN SEQUENCE OF 1775-1789</scope>
    <scope>ACETYLATION</scope>
    <scope>DEGLUTAMYLATION</scope>
    <scope>PHOSPHORYLATION</scope>
    <scope>IDENTIFICATION BY MASS SPECTROMETRY</scope>
</reference>
<reference key="9">
    <citation type="journal article" date="2002" name="Am. J. Physiol.">
        <title>Translocation of telokin by cGMP signaling in smooth muscle cells.</title>
        <authorList>
            <person name="Komatsu S."/>
            <person name="Miyazaki K."/>
            <person name="Tuft R.A."/>
            <person name="Ikebe M."/>
        </authorList>
    </citation>
    <scope>SUBCELLULAR LOCATION</scope>
    <scope>PHOSPHORYLATION AT SER-1762 AND SER-1768</scope>
    <scope>MUTAGENESIS OF SER-1762 AND SER-1768</scope>
</reference>
<reference key="10">
    <citation type="journal article" date="1999" name="Biochemistry">
        <title>Analysis of the functional coupling between calmodulin's calcium binding and peptide recognition properties.</title>
        <authorList>
            <person name="Mirzoeva S."/>
            <person name="Weigand S."/>
            <person name="Lukas T.J."/>
            <person name="Shuvalova L."/>
            <person name="Anderson W.F."/>
            <person name="Watterson D.M."/>
        </authorList>
    </citation>
    <scope>X-RAY CRYSTALLOGRAPHY (1.9 ANGSTROMS) OF 1731-1749 IN COMPLEX WITH CALM1 AND CALCIUM</scope>
</reference>
<reference key="11">
    <citation type="journal article" date="1999" name="Biochemistry">
        <authorList>
            <person name="Mirzoeva S."/>
            <person name="Weigand S."/>
            <person name="Lukas T.J."/>
            <person name="Shuvalova L."/>
            <person name="Anderson W.F."/>
            <person name="Watterson D.M."/>
        </authorList>
    </citation>
    <scope>ERRATUM OF PUBMED:10194305</scope>
</reference>
<dbReference type="EC" id="2.7.11.18"/>
<dbReference type="EMBL" id="X52876">
    <property type="protein sequence ID" value="CAA37056.1"/>
    <property type="molecule type" value="mRNA"/>
</dbReference>
<dbReference type="EMBL" id="X52876">
    <property type="protein sequence ID" value="CAA37057.1"/>
    <property type="molecule type" value="mRNA"/>
</dbReference>
<dbReference type="EMBL" id="X52876">
    <property type="protein sequence ID" value="CAA37058.1"/>
    <property type="molecule type" value="mRNA"/>
</dbReference>
<dbReference type="EMBL" id="M31048">
    <property type="protein sequence ID" value="AAA49069.1"/>
    <property type="molecule type" value="mRNA"/>
</dbReference>
<dbReference type="EMBL" id="M14953">
    <property type="protein sequence ID" value="AAA69964.1"/>
    <property type="molecule type" value="mRNA"/>
</dbReference>
<dbReference type="EMBL" id="AF045285">
    <property type="protein sequence ID" value="AAC29031.1"/>
    <property type="molecule type" value="Genomic_DNA"/>
</dbReference>
<dbReference type="EMBL" id="AF045255">
    <property type="protein sequence ID" value="AAC29031.1"/>
    <property type="status" value="JOINED"/>
    <property type="molecule type" value="Genomic_DNA"/>
</dbReference>
<dbReference type="EMBL" id="AF045256">
    <property type="protein sequence ID" value="AAC29031.1"/>
    <property type="status" value="JOINED"/>
    <property type="molecule type" value="Genomic_DNA"/>
</dbReference>
<dbReference type="EMBL" id="AF045257">
    <property type="protein sequence ID" value="AAC29031.1"/>
    <property type="status" value="JOINED"/>
    <property type="molecule type" value="Genomic_DNA"/>
</dbReference>
<dbReference type="EMBL" id="AF045260">
    <property type="protein sequence ID" value="AAC29031.1"/>
    <property type="status" value="JOINED"/>
    <property type="molecule type" value="Genomic_DNA"/>
</dbReference>
<dbReference type="EMBL" id="AF045259">
    <property type="protein sequence ID" value="AAC29031.1"/>
    <property type="status" value="JOINED"/>
    <property type="molecule type" value="Genomic_DNA"/>
</dbReference>
<dbReference type="EMBL" id="AF045258">
    <property type="protein sequence ID" value="AAC29031.1"/>
    <property type="status" value="JOINED"/>
    <property type="molecule type" value="Genomic_DNA"/>
</dbReference>
<dbReference type="EMBL" id="AF045261">
    <property type="protein sequence ID" value="AAC29031.1"/>
    <property type="status" value="JOINED"/>
    <property type="molecule type" value="Genomic_DNA"/>
</dbReference>
<dbReference type="EMBL" id="AF045263">
    <property type="protein sequence ID" value="AAC29031.1"/>
    <property type="status" value="JOINED"/>
    <property type="molecule type" value="Genomic_DNA"/>
</dbReference>
<dbReference type="EMBL" id="AF045265">
    <property type="protein sequence ID" value="AAC29031.1"/>
    <property type="status" value="JOINED"/>
    <property type="molecule type" value="Genomic_DNA"/>
</dbReference>
<dbReference type="EMBL" id="AF045274">
    <property type="protein sequence ID" value="AAC29031.1"/>
    <property type="status" value="JOINED"/>
    <property type="molecule type" value="Genomic_DNA"/>
</dbReference>
<dbReference type="EMBL" id="AF045273">
    <property type="protein sequence ID" value="AAC29031.1"/>
    <property type="status" value="JOINED"/>
    <property type="molecule type" value="Genomic_DNA"/>
</dbReference>
<dbReference type="EMBL" id="AF045272">
    <property type="protein sequence ID" value="AAC29031.1"/>
    <property type="status" value="JOINED"/>
    <property type="molecule type" value="Genomic_DNA"/>
</dbReference>
<dbReference type="EMBL" id="AF045271">
    <property type="protein sequence ID" value="AAC29031.1"/>
    <property type="status" value="JOINED"/>
    <property type="molecule type" value="Genomic_DNA"/>
</dbReference>
<dbReference type="EMBL" id="AF045270">
    <property type="protein sequence ID" value="AAC29031.1"/>
    <property type="status" value="JOINED"/>
    <property type="molecule type" value="Genomic_DNA"/>
</dbReference>
<dbReference type="EMBL" id="AF045269">
    <property type="protein sequence ID" value="AAC29031.1"/>
    <property type="status" value="JOINED"/>
    <property type="molecule type" value="Genomic_DNA"/>
</dbReference>
<dbReference type="EMBL" id="AF045268">
    <property type="protein sequence ID" value="AAC29031.1"/>
    <property type="status" value="JOINED"/>
    <property type="molecule type" value="Genomic_DNA"/>
</dbReference>
<dbReference type="EMBL" id="AF045267">
    <property type="protein sequence ID" value="AAC29031.1"/>
    <property type="status" value="JOINED"/>
    <property type="molecule type" value="Genomic_DNA"/>
</dbReference>
<dbReference type="EMBL" id="AF045266">
    <property type="protein sequence ID" value="AAC29031.1"/>
    <property type="status" value="JOINED"/>
    <property type="molecule type" value="Genomic_DNA"/>
</dbReference>
<dbReference type="EMBL" id="AF045283">
    <property type="protein sequence ID" value="AAC29031.1"/>
    <property type="status" value="JOINED"/>
    <property type="molecule type" value="Genomic_DNA"/>
</dbReference>
<dbReference type="EMBL" id="AF045282">
    <property type="protein sequence ID" value="AAC29031.1"/>
    <property type="status" value="JOINED"/>
    <property type="molecule type" value="Genomic_DNA"/>
</dbReference>
<dbReference type="EMBL" id="AF045281">
    <property type="protein sequence ID" value="AAC29031.1"/>
    <property type="status" value="JOINED"/>
    <property type="molecule type" value="Genomic_DNA"/>
</dbReference>
<dbReference type="EMBL" id="AF045280">
    <property type="protein sequence ID" value="AAC29031.1"/>
    <property type="status" value="JOINED"/>
    <property type="molecule type" value="Genomic_DNA"/>
</dbReference>
<dbReference type="EMBL" id="AF045279">
    <property type="protein sequence ID" value="AAC29031.1"/>
    <property type="status" value="JOINED"/>
    <property type="molecule type" value="Genomic_DNA"/>
</dbReference>
<dbReference type="EMBL" id="AF045278">
    <property type="protein sequence ID" value="AAC29031.1"/>
    <property type="status" value="JOINED"/>
    <property type="molecule type" value="Genomic_DNA"/>
</dbReference>
<dbReference type="EMBL" id="AF045277">
    <property type="protein sequence ID" value="AAC29031.1"/>
    <property type="status" value="JOINED"/>
    <property type="molecule type" value="Genomic_DNA"/>
</dbReference>
<dbReference type="EMBL" id="AF045276">
    <property type="protein sequence ID" value="AAC29031.1"/>
    <property type="status" value="JOINED"/>
    <property type="molecule type" value="Genomic_DNA"/>
</dbReference>
<dbReference type="EMBL" id="AF045275">
    <property type="protein sequence ID" value="AAC29031.1"/>
    <property type="status" value="JOINED"/>
    <property type="molecule type" value="Genomic_DNA"/>
</dbReference>
<dbReference type="EMBL" id="AF045284">
    <property type="protein sequence ID" value="AAC29031.1"/>
    <property type="status" value="JOINED"/>
    <property type="molecule type" value="Genomic_DNA"/>
</dbReference>
<dbReference type="EMBL" id="AF045264">
    <property type="protein sequence ID" value="AAC29031.1"/>
    <property type="status" value="JOINED"/>
    <property type="molecule type" value="Genomic_DNA"/>
</dbReference>
<dbReference type="EMBL" id="AF045262">
    <property type="protein sequence ID" value="AAC29031.1"/>
    <property type="status" value="JOINED"/>
    <property type="molecule type" value="Genomic_DNA"/>
</dbReference>
<dbReference type="EMBL" id="M96655">
    <property type="protein sequence ID" value="AAA49083.1"/>
    <property type="molecule type" value="mRNA"/>
</dbReference>
<dbReference type="EMBL" id="M88283">
    <property type="protein sequence ID" value="AAA48647.1"/>
    <property type="molecule type" value="mRNA"/>
</dbReference>
<dbReference type="EMBL" id="M88284">
    <property type="protein sequence ID" value="AAB53768.1"/>
    <property type="molecule type" value="Genomic_DNA"/>
</dbReference>
<dbReference type="PIR" id="S68235">
    <property type="entry name" value="S68235"/>
</dbReference>
<dbReference type="RefSeq" id="XP_015145280.1">
    <property type="nucleotide sequence ID" value="XM_015289794.1"/>
</dbReference>
<dbReference type="PDB" id="1CDL">
    <property type="method" value="X-ray"/>
    <property type="resolution" value="2.00 A"/>
    <property type="chains" value="E/F/G/H=1730-1749"/>
</dbReference>
<dbReference type="PDB" id="1QS7">
    <property type="method" value="X-ray"/>
    <property type="resolution" value="1.80 A"/>
    <property type="chains" value="B/D=1731-1749"/>
</dbReference>
<dbReference type="PDB" id="1QTX">
    <property type="method" value="X-ray"/>
    <property type="resolution" value="1.65 A"/>
    <property type="chains" value="B=1731-1749"/>
</dbReference>
<dbReference type="PDB" id="1VRK">
    <property type="method" value="X-ray"/>
    <property type="resolution" value="1.90 A"/>
    <property type="chains" value="B=1731-1749"/>
</dbReference>
<dbReference type="PDB" id="2O5G">
    <property type="method" value="X-ray"/>
    <property type="resolution" value="1.08 A"/>
    <property type="chains" value="B=1730-1748"/>
</dbReference>
<dbReference type="PDB" id="3EK7">
    <property type="method" value="X-ray"/>
    <property type="resolution" value="1.85 A"/>
    <property type="chains" value="A=1730-1763"/>
</dbReference>
<dbReference type="PDB" id="3EK8">
    <property type="method" value="X-ray"/>
    <property type="resolution" value="2.80 A"/>
    <property type="chains" value="A=1730-1763"/>
</dbReference>
<dbReference type="PDB" id="3EKH">
    <property type="method" value="X-ray"/>
    <property type="resolution" value="2.00 A"/>
    <property type="chains" value="A=1730-1763"/>
</dbReference>
<dbReference type="PDB" id="3EKJ">
    <property type="method" value="X-ray"/>
    <property type="resolution" value="2.80 A"/>
    <property type="chains" value="A=1730-1763"/>
</dbReference>
<dbReference type="PDB" id="3EVR">
    <property type="method" value="X-ray"/>
    <property type="resolution" value="2.00 A"/>
    <property type="chains" value="A=1730-1763"/>
</dbReference>
<dbReference type="PDB" id="3EVU">
    <property type="method" value="X-ray"/>
    <property type="resolution" value="1.75 A"/>
    <property type="chains" value="A=1731-1749"/>
</dbReference>
<dbReference type="PDB" id="3EVV">
    <property type="method" value="X-ray"/>
    <property type="resolution" value="2.60 A"/>
    <property type="chains" value="A=1731-1749"/>
</dbReference>
<dbReference type="PDB" id="3O77">
    <property type="method" value="X-ray"/>
    <property type="resolution" value="2.35 A"/>
    <property type="chains" value="A=1730-1749"/>
</dbReference>
<dbReference type="PDB" id="3O78">
    <property type="method" value="X-ray"/>
    <property type="resolution" value="2.60 A"/>
    <property type="chains" value="A/B=1731-1749"/>
</dbReference>
<dbReference type="PDB" id="4OY4">
    <property type="method" value="X-ray"/>
    <property type="resolution" value="2.03 A"/>
    <property type="chains" value="A=1715-1725, A=1731-1749"/>
</dbReference>
<dbReference type="PDBsum" id="1CDL"/>
<dbReference type="PDBsum" id="1QS7"/>
<dbReference type="PDBsum" id="1QTX"/>
<dbReference type="PDBsum" id="1VRK"/>
<dbReference type="PDBsum" id="2O5G"/>
<dbReference type="PDBsum" id="3EK7"/>
<dbReference type="PDBsum" id="3EK8"/>
<dbReference type="PDBsum" id="3EKH"/>
<dbReference type="PDBsum" id="3EKJ"/>
<dbReference type="PDBsum" id="3EVR"/>
<dbReference type="PDBsum" id="3EVU"/>
<dbReference type="PDBsum" id="3EVV"/>
<dbReference type="PDBsum" id="3O77"/>
<dbReference type="PDBsum" id="3O78"/>
<dbReference type="PDBsum" id="4OY4"/>
<dbReference type="BMRB" id="P11799"/>
<dbReference type="SMR" id="P11799"/>
<dbReference type="BioGRID" id="676694">
    <property type="interactions" value="1"/>
</dbReference>
<dbReference type="FunCoup" id="P11799">
    <property type="interactions" value="1272"/>
</dbReference>
<dbReference type="IntAct" id="P11799">
    <property type="interactions" value="3"/>
</dbReference>
<dbReference type="MINT" id="P11799"/>
<dbReference type="STRING" id="9031.ENSGALP00000061379"/>
<dbReference type="BindingDB" id="P11799"/>
<dbReference type="ChEMBL" id="CHEMBL3062"/>
<dbReference type="DrugCentral" id="P11799"/>
<dbReference type="GlyGen" id="P11799">
    <property type="glycosylation" value="2 sites"/>
</dbReference>
<dbReference type="iPTMnet" id="P11799"/>
<dbReference type="PaxDb" id="9031-ENSGALP00000037183"/>
<dbReference type="VEuPathDB" id="HostDB:geneid_396445"/>
<dbReference type="eggNOG" id="KOG0613">
    <property type="taxonomic scope" value="Eukaryota"/>
</dbReference>
<dbReference type="InParanoid" id="P11799"/>
<dbReference type="PhylomeDB" id="P11799"/>
<dbReference type="BRENDA" id="2.7.11.18">
    <property type="organism ID" value="1306"/>
</dbReference>
<dbReference type="EvolutionaryTrace" id="P11799"/>
<dbReference type="PRO" id="PR:P11799"/>
<dbReference type="Proteomes" id="UP000000539">
    <property type="component" value="Unassembled WGS sequence"/>
</dbReference>
<dbReference type="GO" id="GO:0032154">
    <property type="term" value="C:cleavage furrow"/>
    <property type="evidence" value="ECO:0000318"/>
    <property type="project" value="GO_Central"/>
</dbReference>
<dbReference type="GO" id="GO:0005737">
    <property type="term" value="C:cytoplasm"/>
    <property type="evidence" value="ECO:0000318"/>
    <property type="project" value="GO_Central"/>
</dbReference>
<dbReference type="GO" id="GO:0005829">
    <property type="term" value="C:cytosol"/>
    <property type="evidence" value="ECO:0007669"/>
    <property type="project" value="UniProtKB-SubCell"/>
</dbReference>
<dbReference type="GO" id="GO:0030027">
    <property type="term" value="C:lamellipodium"/>
    <property type="evidence" value="ECO:0000318"/>
    <property type="project" value="GO_Central"/>
</dbReference>
<dbReference type="GO" id="GO:0001725">
    <property type="term" value="C:stress fiber"/>
    <property type="evidence" value="ECO:0000318"/>
    <property type="project" value="GO_Central"/>
</dbReference>
<dbReference type="GO" id="GO:0005524">
    <property type="term" value="F:ATP binding"/>
    <property type="evidence" value="ECO:0007669"/>
    <property type="project" value="UniProtKB-KW"/>
</dbReference>
<dbReference type="GO" id="GO:0005516">
    <property type="term" value="F:calmodulin binding"/>
    <property type="evidence" value="ECO:0007669"/>
    <property type="project" value="UniProtKB-KW"/>
</dbReference>
<dbReference type="GO" id="GO:0046872">
    <property type="term" value="F:metal ion binding"/>
    <property type="evidence" value="ECO:0007669"/>
    <property type="project" value="UniProtKB-KW"/>
</dbReference>
<dbReference type="GO" id="GO:0004687">
    <property type="term" value="F:myosin light chain kinase activity"/>
    <property type="evidence" value="ECO:0000318"/>
    <property type="project" value="GO_Central"/>
</dbReference>
<dbReference type="GO" id="GO:0014820">
    <property type="term" value="P:tonic smooth muscle contraction"/>
    <property type="evidence" value="ECO:0000318"/>
    <property type="project" value="GO_Central"/>
</dbReference>
<dbReference type="CDD" id="cd00063">
    <property type="entry name" value="FN3"/>
    <property type="match status" value="1"/>
</dbReference>
<dbReference type="CDD" id="cd05762">
    <property type="entry name" value="IgI_8_hMLCK_like"/>
    <property type="match status" value="1"/>
</dbReference>
<dbReference type="CDD" id="cd20973">
    <property type="entry name" value="IgI_telokin-like"/>
    <property type="match status" value="1"/>
</dbReference>
<dbReference type="CDD" id="cd14191">
    <property type="entry name" value="STKc_MLCK1"/>
    <property type="match status" value="1"/>
</dbReference>
<dbReference type="FunFam" id="2.60.40.10:FF:000147">
    <property type="entry name" value="Myosin light chain kinase"/>
    <property type="match status" value="1"/>
</dbReference>
<dbReference type="FunFam" id="2.60.40.10:FF:000425">
    <property type="entry name" value="Myosin light chain kinase"/>
    <property type="match status" value="1"/>
</dbReference>
<dbReference type="FunFam" id="1.10.510.10:FF:000175">
    <property type="entry name" value="Myosin light chain kinase, smooth muscle"/>
    <property type="match status" value="1"/>
</dbReference>
<dbReference type="FunFam" id="2.60.40.10:FF:000080">
    <property type="entry name" value="Myosin light chain kinase, smooth muscle"/>
    <property type="match status" value="3"/>
</dbReference>
<dbReference type="FunFam" id="2.60.40.10:FF:000145">
    <property type="entry name" value="Myosin light chain kinase, smooth muscle"/>
    <property type="match status" value="1"/>
</dbReference>
<dbReference type="FunFam" id="2.60.40.10:FF:000372">
    <property type="entry name" value="Myosin light chain kinase, smooth muscle"/>
    <property type="match status" value="1"/>
</dbReference>
<dbReference type="FunFam" id="2.60.40.10:FF:000580">
    <property type="entry name" value="Myosin light chain kinase, smooth muscle"/>
    <property type="match status" value="1"/>
</dbReference>
<dbReference type="FunFam" id="3.30.200.20:FF:000198">
    <property type="entry name" value="Myosin light chain kinase, smooth muscle"/>
    <property type="match status" value="1"/>
</dbReference>
<dbReference type="FunFam" id="2.60.40.10:FF:000107">
    <property type="entry name" value="Myosin, light chain kinase a"/>
    <property type="match status" value="1"/>
</dbReference>
<dbReference type="FunFam" id="2.60.40.10:FF:001127">
    <property type="entry name" value="Myosin, light chain kinase a"/>
    <property type="match status" value="1"/>
</dbReference>
<dbReference type="Gene3D" id="2.60.40.10">
    <property type="entry name" value="Immunoglobulins"/>
    <property type="match status" value="10"/>
</dbReference>
<dbReference type="Gene3D" id="3.30.200.20">
    <property type="entry name" value="Phosphorylase Kinase, domain 1"/>
    <property type="match status" value="1"/>
</dbReference>
<dbReference type="Gene3D" id="1.10.510.10">
    <property type="entry name" value="Transferase(Phosphotransferase) domain 1"/>
    <property type="match status" value="1"/>
</dbReference>
<dbReference type="InterPro" id="IPR003961">
    <property type="entry name" value="FN3_dom"/>
</dbReference>
<dbReference type="InterPro" id="IPR036116">
    <property type="entry name" value="FN3_sf"/>
</dbReference>
<dbReference type="InterPro" id="IPR007110">
    <property type="entry name" value="Ig-like_dom"/>
</dbReference>
<dbReference type="InterPro" id="IPR036179">
    <property type="entry name" value="Ig-like_dom_sf"/>
</dbReference>
<dbReference type="InterPro" id="IPR013783">
    <property type="entry name" value="Ig-like_fold"/>
</dbReference>
<dbReference type="InterPro" id="IPR013098">
    <property type="entry name" value="Ig_I-set"/>
</dbReference>
<dbReference type="InterPro" id="IPR003599">
    <property type="entry name" value="Ig_sub"/>
</dbReference>
<dbReference type="InterPro" id="IPR003598">
    <property type="entry name" value="Ig_sub2"/>
</dbReference>
<dbReference type="InterPro" id="IPR011009">
    <property type="entry name" value="Kinase-like_dom_sf"/>
</dbReference>
<dbReference type="InterPro" id="IPR015725">
    <property type="entry name" value="MLCK1_kinase_dom"/>
</dbReference>
<dbReference type="InterPro" id="IPR000719">
    <property type="entry name" value="Prot_kinase_dom"/>
</dbReference>
<dbReference type="InterPro" id="IPR017441">
    <property type="entry name" value="Protein_kinase_ATP_BS"/>
</dbReference>
<dbReference type="InterPro" id="IPR008271">
    <property type="entry name" value="Ser/Thr_kinase_AS"/>
</dbReference>
<dbReference type="PANTHER" id="PTHR47633">
    <property type="entry name" value="IMMUNOGLOBULIN"/>
    <property type="match status" value="1"/>
</dbReference>
<dbReference type="Pfam" id="PF16620">
    <property type="entry name" value="23ISL"/>
    <property type="match status" value="1"/>
</dbReference>
<dbReference type="Pfam" id="PF00041">
    <property type="entry name" value="fn3"/>
    <property type="match status" value="1"/>
</dbReference>
<dbReference type="Pfam" id="PF07679">
    <property type="entry name" value="I-set"/>
    <property type="match status" value="9"/>
</dbReference>
<dbReference type="Pfam" id="PF00069">
    <property type="entry name" value="Pkinase"/>
    <property type="match status" value="1"/>
</dbReference>
<dbReference type="SMART" id="SM00060">
    <property type="entry name" value="FN3"/>
    <property type="match status" value="1"/>
</dbReference>
<dbReference type="SMART" id="SM00409">
    <property type="entry name" value="IG"/>
    <property type="match status" value="9"/>
</dbReference>
<dbReference type="SMART" id="SM00408">
    <property type="entry name" value="IGc2"/>
    <property type="match status" value="9"/>
</dbReference>
<dbReference type="SMART" id="SM00220">
    <property type="entry name" value="S_TKc"/>
    <property type="match status" value="1"/>
</dbReference>
<dbReference type="SUPFAM" id="SSF49265">
    <property type="entry name" value="Fibronectin type III"/>
    <property type="match status" value="1"/>
</dbReference>
<dbReference type="SUPFAM" id="SSF48726">
    <property type="entry name" value="Immunoglobulin"/>
    <property type="match status" value="9"/>
</dbReference>
<dbReference type="SUPFAM" id="SSF56112">
    <property type="entry name" value="Protein kinase-like (PK-like)"/>
    <property type="match status" value="1"/>
</dbReference>
<dbReference type="PROSITE" id="PS50853">
    <property type="entry name" value="FN3"/>
    <property type="match status" value="1"/>
</dbReference>
<dbReference type="PROSITE" id="PS50835">
    <property type="entry name" value="IG_LIKE"/>
    <property type="match status" value="9"/>
</dbReference>
<dbReference type="PROSITE" id="PS00107">
    <property type="entry name" value="PROTEIN_KINASE_ATP"/>
    <property type="match status" value="1"/>
</dbReference>
<dbReference type="PROSITE" id="PS50011">
    <property type="entry name" value="PROTEIN_KINASE_DOM"/>
    <property type="match status" value="1"/>
</dbReference>
<dbReference type="PROSITE" id="PS00108">
    <property type="entry name" value="PROTEIN_KINASE_ST"/>
    <property type="match status" value="1"/>
</dbReference>
<comment type="function">
    <text>Phosphorylates a specific serine in the N-terminus of a myosin light chain, which leads to the formation of calmodulin/MLCK signal transduction complexes which allow selective transduction of calcium signals.</text>
</comment>
<comment type="catalytic activity">
    <reaction>
        <text>L-seryl-[myosin light chain] + ATP = O-phospho-L-seryl-[myosin light chain] + ADP + H(+)</text>
        <dbReference type="Rhea" id="RHEA:22004"/>
        <dbReference type="Rhea" id="RHEA-COMP:13684"/>
        <dbReference type="Rhea" id="RHEA-COMP:13685"/>
        <dbReference type="ChEBI" id="CHEBI:15378"/>
        <dbReference type="ChEBI" id="CHEBI:29999"/>
        <dbReference type="ChEBI" id="CHEBI:30616"/>
        <dbReference type="ChEBI" id="CHEBI:83421"/>
        <dbReference type="ChEBI" id="CHEBI:456216"/>
        <dbReference type="EC" id="2.7.11.18"/>
    </reaction>
</comment>
<comment type="catalytic activity">
    <reaction>
        <text>L-threonyl-[myosin light chain] + ATP = O-phospho-L-threonyl-[myosin light chain] + ADP + H(+)</text>
        <dbReference type="Rhea" id="RHEA:53900"/>
        <dbReference type="Rhea" id="RHEA-COMP:13686"/>
        <dbReference type="Rhea" id="RHEA-COMP:13687"/>
        <dbReference type="ChEBI" id="CHEBI:15378"/>
        <dbReference type="ChEBI" id="CHEBI:30013"/>
        <dbReference type="ChEBI" id="CHEBI:30616"/>
        <dbReference type="ChEBI" id="CHEBI:61977"/>
        <dbReference type="ChEBI" id="CHEBI:456216"/>
        <dbReference type="EC" id="2.7.11.18"/>
    </reaction>
</comment>
<comment type="cofactor">
    <cofactor evidence="1">
        <name>Mg(2+)</name>
        <dbReference type="ChEBI" id="CHEBI:18420"/>
    </cofactor>
</comment>
<comment type="cofactor">
    <cofactor evidence="1">
        <name>Ca(2+)</name>
        <dbReference type="ChEBI" id="CHEBI:29108"/>
    </cofactor>
</comment>
<comment type="activity regulation">
    <text>Activated by phosphorylation on Tyr-478. Isoforms which lack this tyrosine residue are not regulated in this way. All catalytically active isoforms require binding to calcium and calmodulin for activation.</text>
</comment>
<comment type="subunit">
    <text evidence="6">All isoforms including Telokin bind calmodulin.</text>
</comment>
<comment type="subcellular location">
    <subcellularLocation>
        <location evidence="7">Cytoplasm</location>
        <location evidence="7">Cytosol</location>
    </subcellularLocation>
    <subcellularLocation>
        <location evidence="7">Membrane</location>
    </subcellularLocation>
    <text>Telokin is cytosolic and can translocate to the membrane upon stimulation.</text>
</comment>
<comment type="alternative products">
    <event type="alternative promoter"/>
    <isoform>
        <id>P11799-1</id>
        <name>1</name>
        <name>MLCK-108</name>
        <name>Smooth-muscle</name>
        <sequence type="displayed"/>
    </isoform>
    <isoform>
        <id>P11799-2</id>
        <name>2</name>
        <name>MLCK-210</name>
        <name>Non-muscle</name>
        <sequence type="described" ref="VSP_018851"/>
    </isoform>
    <isoform>
        <id>P11799-3</id>
        <name>3</name>
        <name>Telokin</name>
        <sequence type="described" ref="VSP_018852"/>
    </isoform>
</comment>
<comment type="tissue specificity">
    <text>Isoform telokin is expressed in gizzard, heart, lung, intestine, and skeletal muscle although the levels of the expression in the latter were much less than that in the gizzard.</text>
</comment>
<comment type="PTM">
    <text evidence="8">The C-terminus is deglutamylated, leading to the formation of Myosin light chain kinase, smooth muscle, deglutamylated form. The C-terminus is variable, with one to five C-terminal glutamyl residues being removed producing five forms differring in their number of C-terminal glutamyl residues.</text>
</comment>
<comment type="PTM">
    <text evidence="8">Acetylated.</text>
</comment>
<comment type="PTM">
    <text evidence="7 8">Phosphorylation of telokin by PKG has no significant effect on its myosin binding activity, but promotes translocation to the membrane.</text>
</comment>
<comment type="similarity">
    <text evidence="12">Belongs to the protein kinase superfamily. CAMK Ser/Thr protein kinase family.</text>
</comment>
<sequence>MGDVKLVTSTRVSKTSLTLSPSVPAEAPAFTLPPRNIRVQLGATARFEGKVRGYPEPQITWYRNGHPLPEGDHYVVDHSIRGIFSLVIKGVQEGDSGKYTCEAANDGGVRQVTVELTVEGNSLKKYSLPSSAKTPGGRLSVPPVEHRPSIWGESPPKFATKPNRVVVREGQTGRFSCKITGRPQPQVTWTKGDIHLQQNERFNMFEKTGIQYLEIQNVQLADAGIYTCTVVNSAGKASVSAELTVQGPDKTDTHAQPLCMPPKPTTLATKAIENSDFKQATSNGIAKELKSTSTELMVETKDRLSAKKETFYTSREAKDGKQGQNQEANAVPLQESRGTKGPQVLQKTSSTITLQAVKAQPEPKAEPQTTFIRQAEDRKRTVQPLMTTTTQENPSLTGQVSPRSRETENRAGVRKSVKEEKREPLGIPPQFESRPQSLEASEGQEIKFKSKVSGKPKPDVEWFKEGVPIKTGEGIQIYEEDGTHCLWLKKACLGDSGSYSCAAFNPRGQTSTSWLLTVKRPKVEEVAPCFSSVLKGCTVSEGQDFVLQCYVGGVPVPEITWLLNEQPIQYAHSTFEAGVAKLTVQDALPEDDGIYTCLAENNAGRASCSAQVTVKEKKSSKKAEGTQAAKLNKTFAPIFLKGLTDLKVMDGSQVIMTVEVSANPCPEIIWLHNGKEIQETEDFHFEKKGNEYSLYIQEVFPEDTGKYTCEAWNELGETQTQATLTVQEPQDGIQPWFISKPRSVTAAAGQNVLISCAIAGDPFPTVHWFKDGQEITPGTGCEILQNEDIFTLILRNVQSRHAGQYEIQLRNQVGECSCQVSLMLRESSASRAEMLRDGRESASSGERRDGGNYGALTFGRTSGFKKSSSETRAAEEEQEDVRGVLKRRVETREHTEESLRQQEAEQLDFRDILGKKVSTKSFSEEDLKEIPAEQMDFRANLQRQVKPKTLSEEERKVHAPQQVDFRSVLAKKGTPKTPLPEKVPPPKPAVTDFRSVLGAKKKPPAENGSASTPAPNARAGSEAQNATPNSEAPAPKPVVKKEEKNDRKCEHGCAVVDGGIIGKKAENKPAASKPTPPPSKGTAPSFTEKLQDAKVADGEKLVLQCRISSDPPASVSWTLDSKAIKSSKSIVISQEGTLCSLTIEKVMPEDGGEYKCIAENAAGKAECACKVLVEDTSSTKAAKPAEKKTKKPKTTLPPVLSTESSEATVKKKPAPKTPPKAATPPQITQFPEDRKVRAGESVELFAKVVGTAPITCTWMKFRKQIQENEYIKIENAENSSKLTISSTKQEHCGCYTLVVENKLGSRQAQVNLTVVDKPDPPAGTPCASDIRSSSLTLSWYGSSYDGGSAVQSYTVEIWNSVDNKWTDLTTCRSTSFNVQDLQADREYKFRVRAANVYGISEPSQESEVVKVGEKQEEELKEEEAELSDDEGKETEVNYRTVTINTEQKVSDVYNIEERLGSGKFGQVFRLVEKKTGKVWAGKFFKAYSAKEKENIRDEISIMNCLHHPKLVQCVDAFEEKANIVMVLEMVSGGELFERIIDEDFELTERECIKYMRQISEGVEYIHKQGIVHLDLKPENIMCVNKTGTSIKLIDFGLARRLESAGSLKVLFGTPEFVAPEVINYEPIGYETDMWSIGVICYILVSGLSPFMGDNDNETLANVTSATWDFDDEAFDEISDDAKDFISNLLKKDMKSRLNCTQCLQHPWLQKDTKNMEAKKLSKDRMKKYMARRKWQKTGHAVRAIGRLSSMAMISGMSGRKASGSSPTSPINADKVENEDAFLEEVAEEKPHVKPYFTKTILDMEVVEGSAARFDCKIEGYPDPEVMWYKDDQPVKESRHFQIDYDEEGNCSLTISEVCGDDDAKYTCKAVNSLGEATCTAELLVETMGKEGEGEGEGEEDEEEEEE</sequence>
<keyword id="KW-0002">3D-structure</keyword>
<keyword id="KW-0007">Acetylation</keyword>
<keyword id="KW-0877">Alternative promoter usage</keyword>
<keyword id="KW-0067">ATP-binding</keyword>
<keyword id="KW-0106">Calcium</keyword>
<keyword id="KW-0112">Calmodulin-binding</keyword>
<keyword id="KW-0963">Cytoplasm</keyword>
<keyword id="KW-0903">Direct protein sequencing</keyword>
<keyword id="KW-0393">Immunoglobulin domain</keyword>
<keyword id="KW-0418">Kinase</keyword>
<keyword id="KW-0460">Magnesium</keyword>
<keyword id="KW-0472">Membrane</keyword>
<keyword id="KW-0479">Metal-binding</keyword>
<keyword id="KW-0547">Nucleotide-binding</keyword>
<keyword id="KW-0597">Phosphoprotein</keyword>
<keyword id="KW-1185">Reference proteome</keyword>
<keyword id="KW-0677">Repeat</keyword>
<keyword id="KW-0723">Serine/threonine-protein kinase</keyword>
<keyword id="KW-0808">Transferase</keyword>
<accession>P11799</accession>
<accession>P19038</accession>
<accession>Q549S2</accession>
<organism>
    <name type="scientific">Gallus gallus</name>
    <name type="common">Chicken</name>
    <dbReference type="NCBI Taxonomy" id="9031"/>
    <lineage>
        <taxon>Eukaryota</taxon>
        <taxon>Metazoa</taxon>
        <taxon>Chordata</taxon>
        <taxon>Craniata</taxon>
        <taxon>Vertebrata</taxon>
        <taxon>Euteleostomi</taxon>
        <taxon>Archelosauria</taxon>
        <taxon>Archosauria</taxon>
        <taxon>Dinosauria</taxon>
        <taxon>Saurischia</taxon>
        <taxon>Theropoda</taxon>
        <taxon>Coelurosauria</taxon>
        <taxon>Aves</taxon>
        <taxon>Neognathae</taxon>
        <taxon>Galloanserae</taxon>
        <taxon>Galliformes</taxon>
        <taxon>Phasianidae</taxon>
        <taxon>Phasianinae</taxon>
        <taxon>Gallus</taxon>
    </lineage>
</organism>
<protein>
    <recommendedName>
        <fullName>Myosin light chain kinase, smooth muscle</fullName>
        <shortName>MLCK</shortName>
        <ecNumber>2.7.11.18</ecNumber>
    </recommendedName>
    <alternativeName>
        <fullName>Telokin</fullName>
    </alternativeName>
    <component>
        <recommendedName>
            <fullName>Myosin light chain kinase, smooth muscle, deglutamylated form</fullName>
        </recommendedName>
    </component>
</protein>
<name>MYLK_CHICK</name>
<proteinExistence type="evidence at protein level"/>
<gene>
    <name type="primary">Mylk</name>
</gene>